<feature type="chain" id="PRO_0000171167" description="Probable metal transport system membrane protein CPn_0346/CP_0414/CPj0346/CpB0353">
    <location>
        <begin position="1"/>
        <end position="324"/>
    </location>
</feature>
<feature type="transmembrane region" description="Helical" evidence="1">
    <location>
        <begin position="1"/>
        <end position="21"/>
    </location>
</feature>
<feature type="transmembrane region" description="Helical" evidence="1">
    <location>
        <begin position="39"/>
        <end position="59"/>
    </location>
</feature>
<feature type="transmembrane region" description="Helical" evidence="1">
    <location>
        <begin position="64"/>
        <end position="84"/>
    </location>
</feature>
<feature type="transmembrane region" description="Helical" evidence="1">
    <location>
        <begin position="94"/>
        <end position="114"/>
    </location>
</feature>
<feature type="transmembrane region" description="Helical" evidence="1">
    <location>
        <begin position="125"/>
        <end position="145"/>
    </location>
</feature>
<feature type="transmembrane region" description="Helical" evidence="1">
    <location>
        <begin position="165"/>
        <end position="185"/>
    </location>
</feature>
<feature type="transmembrane region" description="Helical" evidence="1">
    <location>
        <begin position="201"/>
        <end position="221"/>
    </location>
</feature>
<feature type="transmembrane region" description="Helical" evidence="1">
    <location>
        <begin position="226"/>
        <end position="246"/>
    </location>
</feature>
<feature type="transmembrane region" description="Helical" evidence="1">
    <location>
        <begin position="252"/>
        <end position="272"/>
    </location>
</feature>
<feature type="transmembrane region" description="Helical" evidence="1">
    <location>
        <begin position="286"/>
        <end position="306"/>
    </location>
</feature>
<keyword id="KW-0997">Cell inner membrane</keyword>
<keyword id="KW-1003">Cell membrane</keyword>
<keyword id="KW-0472">Membrane</keyword>
<keyword id="KW-0812">Transmembrane</keyword>
<keyword id="KW-1133">Transmembrane helix</keyword>
<keyword id="KW-0813">Transport</keyword>
<gene>
    <name type="ordered locus">CPn_0346</name>
    <name type="ordered locus">CP_0414</name>
    <name type="ordered locus">CPj0346</name>
    <name type="ordered locus">CpB0353</name>
</gene>
<reference key="1">
    <citation type="journal article" date="1999" name="Nat. Genet.">
        <title>Comparative genomes of Chlamydia pneumoniae and C. trachomatis.</title>
        <authorList>
            <person name="Kalman S."/>
            <person name="Mitchell W.P."/>
            <person name="Marathe R."/>
            <person name="Lammel C.J."/>
            <person name="Fan J."/>
            <person name="Hyman R.W."/>
            <person name="Olinger L."/>
            <person name="Grimwood J."/>
            <person name="Davis R.W."/>
            <person name="Stephens R.S."/>
        </authorList>
    </citation>
    <scope>NUCLEOTIDE SEQUENCE [LARGE SCALE GENOMIC DNA]</scope>
    <source>
        <strain>CWL029</strain>
    </source>
</reference>
<reference key="2">
    <citation type="journal article" date="2000" name="Nucleic Acids Res.">
        <title>Genome sequences of Chlamydia trachomatis MoPn and Chlamydia pneumoniae AR39.</title>
        <authorList>
            <person name="Read T.D."/>
            <person name="Brunham R.C."/>
            <person name="Shen C."/>
            <person name="Gill S.R."/>
            <person name="Heidelberg J.F."/>
            <person name="White O."/>
            <person name="Hickey E.K."/>
            <person name="Peterson J.D."/>
            <person name="Utterback T.R."/>
            <person name="Berry K.J."/>
            <person name="Bass S."/>
            <person name="Linher K.D."/>
            <person name="Weidman J.F."/>
            <person name="Khouri H.M."/>
            <person name="Craven B."/>
            <person name="Bowman C."/>
            <person name="Dodson R.J."/>
            <person name="Gwinn M.L."/>
            <person name="Nelson W.C."/>
            <person name="DeBoy R.T."/>
            <person name="Kolonay J.F."/>
            <person name="McClarty G."/>
            <person name="Salzberg S.L."/>
            <person name="Eisen J.A."/>
            <person name="Fraser C.M."/>
        </authorList>
    </citation>
    <scope>NUCLEOTIDE SEQUENCE [LARGE SCALE GENOMIC DNA]</scope>
    <source>
        <strain>AR39</strain>
    </source>
</reference>
<reference key="3">
    <citation type="journal article" date="2000" name="Nucleic Acids Res.">
        <title>Comparison of whole genome sequences of Chlamydia pneumoniae J138 from Japan and CWL029 from USA.</title>
        <authorList>
            <person name="Shirai M."/>
            <person name="Hirakawa H."/>
            <person name="Kimoto M."/>
            <person name="Tabuchi M."/>
            <person name="Kishi F."/>
            <person name="Ouchi K."/>
            <person name="Shiba T."/>
            <person name="Ishii K."/>
            <person name="Hattori M."/>
            <person name="Kuhara S."/>
            <person name="Nakazawa T."/>
        </authorList>
    </citation>
    <scope>NUCLEOTIDE SEQUENCE [LARGE SCALE GENOMIC DNA]</scope>
    <source>
        <strain>J138</strain>
    </source>
</reference>
<reference key="4">
    <citation type="submission" date="2002-05" db="EMBL/GenBank/DDBJ databases">
        <title>The genome sequence of Chlamydia pneumoniae TW183 and comparison with other Chlamydia strains based on whole genome sequence analysis.</title>
        <authorList>
            <person name="Geng M.M."/>
            <person name="Schuhmacher A."/>
            <person name="Muehldorfer I."/>
            <person name="Bensch K.W."/>
            <person name="Schaefer K.P."/>
            <person name="Schneider S."/>
            <person name="Pohl T."/>
            <person name="Essig A."/>
            <person name="Marre R."/>
            <person name="Melchers K."/>
        </authorList>
    </citation>
    <scope>NUCLEOTIDE SEQUENCE [LARGE SCALE GENOMIC DNA]</scope>
    <source>
        <strain>TW-183</strain>
    </source>
</reference>
<comment type="function">
    <text>Part of an ATP-driven transport system CPn_0346/CPn_0347/CPn_0348/CPn_0349 for a metal.</text>
</comment>
<comment type="subcellular location">
    <subcellularLocation>
        <location evidence="2">Cell inner membrane</location>
        <topology evidence="2">Multi-pass membrane protein</topology>
    </subcellularLocation>
</comment>
<comment type="similarity">
    <text evidence="2">Belongs to the ABC-3 integral membrane protein family.</text>
</comment>
<dbReference type="EMBL" id="AE001363">
    <property type="protein sequence ID" value="AAD18490.1"/>
    <property type="molecule type" value="Genomic_DNA"/>
</dbReference>
<dbReference type="EMBL" id="AE002161">
    <property type="protein sequence ID" value="AAF38258.1"/>
    <property type="molecule type" value="Genomic_DNA"/>
</dbReference>
<dbReference type="EMBL" id="BA000008">
    <property type="protein sequence ID" value="BAA98554.1"/>
    <property type="molecule type" value="Genomic_DNA"/>
</dbReference>
<dbReference type="EMBL" id="AE009440">
    <property type="protein sequence ID" value="AAP98284.1"/>
    <property type="molecule type" value="Genomic_DNA"/>
</dbReference>
<dbReference type="PIR" id="H72088">
    <property type="entry name" value="H72088"/>
</dbReference>
<dbReference type="PIR" id="H86533">
    <property type="entry name" value="H86533"/>
</dbReference>
<dbReference type="RefSeq" id="NP_224546.1">
    <property type="nucleotide sequence ID" value="NC_000922.1"/>
</dbReference>
<dbReference type="RefSeq" id="WP_010882989.1">
    <property type="nucleotide sequence ID" value="NZ_LN847257.1"/>
</dbReference>
<dbReference type="SMR" id="Q9Z8J7"/>
<dbReference type="STRING" id="406984.CPK_ORF00853"/>
<dbReference type="GeneID" id="45050391"/>
<dbReference type="KEGG" id="cpa:CP_0414"/>
<dbReference type="KEGG" id="cpj:ytgD"/>
<dbReference type="KEGG" id="cpn:CPn_0346"/>
<dbReference type="KEGG" id="cpt:CpB0353"/>
<dbReference type="PATRIC" id="fig|115713.3.peg.382"/>
<dbReference type="eggNOG" id="COG1108">
    <property type="taxonomic scope" value="Bacteria"/>
</dbReference>
<dbReference type="HOGENOM" id="CLU_028808_2_0_0"/>
<dbReference type="OrthoDB" id="9788905at2"/>
<dbReference type="Proteomes" id="UP000000583">
    <property type="component" value="Chromosome"/>
</dbReference>
<dbReference type="Proteomes" id="UP000000801">
    <property type="component" value="Chromosome"/>
</dbReference>
<dbReference type="GO" id="GO:0043190">
    <property type="term" value="C:ATP-binding cassette (ABC) transporter complex"/>
    <property type="evidence" value="ECO:0007669"/>
    <property type="project" value="InterPro"/>
</dbReference>
<dbReference type="GO" id="GO:0010043">
    <property type="term" value="P:response to zinc ion"/>
    <property type="evidence" value="ECO:0007669"/>
    <property type="project" value="TreeGrafter"/>
</dbReference>
<dbReference type="GO" id="GO:0055085">
    <property type="term" value="P:transmembrane transport"/>
    <property type="evidence" value="ECO:0007669"/>
    <property type="project" value="InterPro"/>
</dbReference>
<dbReference type="CDD" id="cd06550">
    <property type="entry name" value="TM_ABC_iron-siderophores_like"/>
    <property type="match status" value="1"/>
</dbReference>
<dbReference type="Gene3D" id="1.10.3470.10">
    <property type="entry name" value="ABC transporter involved in vitamin B12 uptake, BtuC"/>
    <property type="match status" value="1"/>
</dbReference>
<dbReference type="InterPro" id="IPR037294">
    <property type="entry name" value="ABC_BtuC-like"/>
</dbReference>
<dbReference type="InterPro" id="IPR001626">
    <property type="entry name" value="ABC_TroCD"/>
</dbReference>
<dbReference type="PANTHER" id="PTHR30477">
    <property type="entry name" value="ABC-TRANSPORTER METAL-BINDING PROTEIN"/>
    <property type="match status" value="1"/>
</dbReference>
<dbReference type="PANTHER" id="PTHR30477:SF8">
    <property type="entry name" value="METAL TRANSPORT SYSTEM MEMBRANE PROTEIN CT_070-RELATED"/>
    <property type="match status" value="1"/>
</dbReference>
<dbReference type="Pfam" id="PF00950">
    <property type="entry name" value="ABC-3"/>
    <property type="match status" value="1"/>
</dbReference>
<dbReference type="SUPFAM" id="SSF81345">
    <property type="entry name" value="ABC transporter involved in vitamin B12 uptake, BtuC"/>
    <property type="match status" value="1"/>
</dbReference>
<accession>Q9Z8J7</accession>
<proteinExistence type="inferred from homology"/>
<name>Y346_CHLPN</name>
<evidence type="ECO:0000255" key="1"/>
<evidence type="ECO:0000305" key="2"/>
<sequence>MALGPSPYYGVSFFQFFSVFFSRLFSGSLFTGSLYIDDIQIIVFLAISCSGAFAGTFLVLRKMAMYANAVSHTVLFGLVCVCLFTHQLTTLSLGTLTLAAMATAMLTGFLIYFIRNTFKVSEESSTALVFSLLFSLSLVLLVFMTKNAHIGTELVLGNADSLTKEDIFPVTIVILANAVITIFAFRSLVCSSFDSVFASSLGIPIRLVDYLIIFQLSACLVGAFKAVGVLMALAFLIIPSLIAKVIAKSIRSLMAWSLVFSIGTAFLAPASSRAILSAYDLGLSTSGISVVFLTMMYIVVKFISYFRGYFSKNFEKISEKSSQY</sequence>
<organism>
    <name type="scientific">Chlamydia pneumoniae</name>
    <name type="common">Chlamydophila pneumoniae</name>
    <dbReference type="NCBI Taxonomy" id="83558"/>
    <lineage>
        <taxon>Bacteria</taxon>
        <taxon>Pseudomonadati</taxon>
        <taxon>Chlamydiota</taxon>
        <taxon>Chlamydiia</taxon>
        <taxon>Chlamydiales</taxon>
        <taxon>Chlamydiaceae</taxon>
        <taxon>Chlamydia/Chlamydophila group</taxon>
        <taxon>Chlamydia</taxon>
    </lineage>
</organism>
<protein>
    <recommendedName>
        <fullName>Probable metal transport system membrane protein CPn_0346/CP_0414/CPj0346/CpB0353</fullName>
    </recommendedName>
</protein>